<gene>
    <name evidence="1" type="primary">NP</name>
</gene>
<reference key="1">
    <citation type="submission" date="2005-08" db="EMBL/GenBank/DDBJ databases">
        <title>The NIAID influenza genome sequencing project.</title>
        <authorList>
            <person name="Ghedin E."/>
            <person name="Spiro D."/>
            <person name="Miller N."/>
            <person name="Zaborsky J."/>
            <person name="Feldblyum T."/>
            <person name="Subbu V."/>
            <person name="Shumway M."/>
            <person name="Sparenborg J."/>
            <person name="Groveman L."/>
            <person name="Halpin R."/>
            <person name="Sitz J."/>
            <person name="Koo H."/>
            <person name="Salzberg S.L."/>
            <person name="Webster R.G."/>
            <person name="Hoffmann E."/>
            <person name="Krauss S."/>
            <person name="Naeve C."/>
            <person name="Bao Y."/>
            <person name="Bolotov P."/>
            <person name="Dernovoy D."/>
            <person name="Kiryutin B."/>
            <person name="Lipman D.J."/>
            <person name="Tatusova T."/>
        </authorList>
    </citation>
    <scope>NUCLEOTIDE SEQUENCE [GENOMIC RNA]</scope>
</reference>
<sequence>MASQGTTRSYEQMETDGERQNATEIRASVGKMVDGIGRFYIQMCTELKLSDYEGRLIQNSLTIERMVLSAFDERRNRYLEEHPSAGKDPKKTGGPIYRRVDGKWIRELVLYDKEEIRRIWRQANNGDDATAGLTHMMIWHSNLNDTTYQRTRALVRTGMDPRMCSLMQGSTLPRRSGAAGAAVKGVGTMVMELIRMIKRGINDRNFWRGENGRKTRGAYERMCNILKGKFQTAAQRAMMDQVRESRNPGNAEIEDLIFLARSALVLRGSVAHKSCLPACVYGPAVASGYDFEKEGYSLVGIDPFKLLQNSQVYSLIRPNENPAHKSQLVWMACNSAAFEDLRVLSFIRGTKVSPRGKLSTRGVQIASNENMDTMESSTLELRSKYWAIRTRSGGNTNQQRASAGQISVQPAFSVQRNLPFDKPTIMAAFTGNTEGRTSDMRAEIIRMMEGAKPEEVSFRGRGVFELSDEKATNPIVPSFDMSNEGSYFFGDNAEEYDN</sequence>
<organism>
    <name type="scientific">Influenza A virus (strain A/Memphis/1/1971 H3N2)</name>
    <dbReference type="NCBI Taxonomy" id="383586"/>
    <lineage>
        <taxon>Viruses</taxon>
        <taxon>Riboviria</taxon>
        <taxon>Orthornavirae</taxon>
        <taxon>Negarnaviricota</taxon>
        <taxon>Polyploviricotina</taxon>
        <taxon>Insthoviricetes</taxon>
        <taxon>Articulavirales</taxon>
        <taxon>Orthomyxoviridae</taxon>
        <taxon>Alphainfluenzavirus</taxon>
        <taxon>Alphainfluenzavirus influenzae</taxon>
        <taxon>Influenza A virus</taxon>
    </lineage>
</organism>
<protein>
    <recommendedName>
        <fullName evidence="1">Nucleoprotein</fullName>
    </recommendedName>
    <alternativeName>
        <fullName evidence="1">Nucleocapsid protein</fullName>
        <shortName evidence="1">Protein N</shortName>
    </alternativeName>
</protein>
<name>NCAP_I71A1</name>
<keyword id="KW-0167">Capsid protein</keyword>
<keyword id="KW-1139">Helical capsid protein</keyword>
<keyword id="KW-1048">Host nucleus</keyword>
<keyword id="KW-0945">Host-virus interaction</keyword>
<keyword id="KW-0687">Ribonucleoprotein</keyword>
<keyword id="KW-0694">RNA-binding</keyword>
<keyword id="KW-0543">Viral nucleoprotein</keyword>
<keyword id="KW-1163">Viral penetration into host nucleus</keyword>
<keyword id="KW-0946">Virion</keyword>
<keyword id="KW-1160">Virus entry into host cell</keyword>
<evidence type="ECO:0000255" key="1">
    <source>
        <dbReference type="HAMAP-Rule" id="MF_04070"/>
    </source>
</evidence>
<evidence type="ECO:0000256" key="2">
    <source>
        <dbReference type="SAM" id="MobiDB-lite"/>
    </source>
</evidence>
<accession>Q3YPZ1</accession>
<comment type="function">
    <text evidence="1">Encapsidates the negative strand viral RNA, protecting it from nucleases. The encapsidated genomic RNA is termed the ribonucleoprotein (RNP) and serves as template for transcription and replication. The RNP needs to be localized in the host nucleus to start an infectious cycle, but is too large to diffuse through the nuclear pore complex. NP comprises at least 2 nuclear localization signals that are responsible for the active RNP import into the nucleus through cellular importin alpha/beta pathway. Later in the infection, nclear export of RNPs are mediated through viral proteins NEP interacting with M1 which binds nucleoproteins. It is possible that nucleoprotein binds directly host exportin-1/XPO1 and plays an active role in RNPs nuclear export. M1 interaction with RNP seems to hide nucleoprotein's nuclear localization signals. Soon after a virion infects a new cell, M1 dissociates from the RNP under acidification of the virion driven by M2 protein. Dissociation of M1 from RNP unmasks nucleoprotein's nuclear localization signals, targeting the RNP to the nucleus.</text>
</comment>
<comment type="subunit">
    <text evidence="1">Homomultimerizes to form the nucleocapsid. May bind host exportin-1/XPO1. Binds to viral genomic RNA. Protein-RNA contacts are mediated by a combination of electrostatic interactions between positively charged residues and the phosphate backbone and planar interactions between aromatic side chains and bases.</text>
</comment>
<comment type="subcellular location">
    <subcellularLocation>
        <location evidence="1">Virion</location>
    </subcellularLocation>
    <subcellularLocation>
        <location evidence="1">Host nucleus</location>
    </subcellularLocation>
</comment>
<comment type="PTM">
    <text evidence="1">Late in virus-infected cells, may be cleaved from a 56-kDa protein to a 53-kDa protein by a cellular caspase. This cleavage might be a marker for the onset of apoptosis in infected cells or have a specific function in virus host interaction.</text>
</comment>
<comment type="similarity">
    <text evidence="1">Belongs to the influenza viruses nucleoprotein family.</text>
</comment>
<organismHost>
    <name type="scientific">Aves</name>
    <dbReference type="NCBI Taxonomy" id="8782"/>
</organismHost>
<organismHost>
    <name type="scientific">Cetacea</name>
    <name type="common">whales</name>
    <dbReference type="NCBI Taxonomy" id="9721"/>
</organismHost>
<organismHost>
    <name type="scientific">Homo sapiens</name>
    <name type="common">Human</name>
    <dbReference type="NCBI Taxonomy" id="9606"/>
</organismHost>
<organismHost>
    <name type="scientific">Phocidae</name>
    <name type="common">true seals</name>
    <dbReference type="NCBI Taxonomy" id="9709"/>
</organismHost>
<organismHost>
    <name type="scientific">Sus scrofa</name>
    <name type="common">Pig</name>
    <dbReference type="NCBI Taxonomy" id="9823"/>
</organismHost>
<feature type="chain" id="PRO_0000402426" description="Nucleoprotein">
    <location>
        <begin position="1"/>
        <end position="498"/>
    </location>
</feature>
<feature type="region of interest" description="Disordered" evidence="2">
    <location>
        <begin position="1"/>
        <end position="23"/>
    </location>
</feature>
<feature type="short sequence motif" description="Unconventional nuclear localization signal" evidence="1">
    <location>
        <begin position="1"/>
        <end position="18"/>
    </location>
</feature>
<feature type="short sequence motif" description="Bipartite nuclear localization signal" evidence="1">
    <location>
        <begin position="198"/>
        <end position="216"/>
    </location>
</feature>
<feature type="compositionally biased region" description="Polar residues" evidence="2">
    <location>
        <begin position="1"/>
        <end position="12"/>
    </location>
</feature>
<dbReference type="EMBL" id="CY002499">
    <property type="protein sequence ID" value="AAZ80011.1"/>
    <property type="molecule type" value="Genomic_RNA"/>
</dbReference>
<dbReference type="SMR" id="Q3YPZ1"/>
<dbReference type="PRO" id="PR:Q3YPZ1"/>
<dbReference type="Proteomes" id="UP000154307">
    <property type="component" value="Genome"/>
</dbReference>
<dbReference type="GO" id="GO:0019029">
    <property type="term" value="C:helical viral capsid"/>
    <property type="evidence" value="ECO:0007669"/>
    <property type="project" value="UniProtKB-UniRule"/>
</dbReference>
<dbReference type="GO" id="GO:0043657">
    <property type="term" value="C:host cell"/>
    <property type="evidence" value="ECO:0007669"/>
    <property type="project" value="GOC"/>
</dbReference>
<dbReference type="GO" id="GO:0042025">
    <property type="term" value="C:host cell nucleus"/>
    <property type="evidence" value="ECO:0007669"/>
    <property type="project" value="UniProtKB-SubCell"/>
</dbReference>
<dbReference type="GO" id="GO:1990904">
    <property type="term" value="C:ribonucleoprotein complex"/>
    <property type="evidence" value="ECO:0007669"/>
    <property type="project" value="UniProtKB-KW"/>
</dbReference>
<dbReference type="GO" id="GO:0019013">
    <property type="term" value="C:viral nucleocapsid"/>
    <property type="evidence" value="ECO:0007669"/>
    <property type="project" value="UniProtKB-UniRule"/>
</dbReference>
<dbReference type="GO" id="GO:0003723">
    <property type="term" value="F:RNA binding"/>
    <property type="evidence" value="ECO:0007669"/>
    <property type="project" value="UniProtKB-UniRule"/>
</dbReference>
<dbReference type="GO" id="GO:0005198">
    <property type="term" value="F:structural molecule activity"/>
    <property type="evidence" value="ECO:0007669"/>
    <property type="project" value="UniProtKB-UniRule"/>
</dbReference>
<dbReference type="GO" id="GO:0046718">
    <property type="term" value="P:symbiont entry into host cell"/>
    <property type="evidence" value="ECO:0007669"/>
    <property type="project" value="UniProtKB-KW"/>
</dbReference>
<dbReference type="GO" id="GO:0075732">
    <property type="term" value="P:viral penetration into host nucleus"/>
    <property type="evidence" value="ECO:0007669"/>
    <property type="project" value="UniProtKB-UniRule"/>
</dbReference>
<dbReference type="HAMAP" id="MF_04070">
    <property type="entry name" value="INFV_NCAP"/>
    <property type="match status" value="1"/>
</dbReference>
<dbReference type="InterPro" id="IPR002141">
    <property type="entry name" value="Flu_NP"/>
</dbReference>
<dbReference type="Pfam" id="PF00506">
    <property type="entry name" value="Flu_NP"/>
    <property type="match status" value="1"/>
</dbReference>
<dbReference type="SUPFAM" id="SSF161003">
    <property type="entry name" value="flu NP-like"/>
    <property type="match status" value="1"/>
</dbReference>
<proteinExistence type="inferred from homology"/>